<evidence type="ECO:0000255" key="1">
    <source>
        <dbReference type="HAMAP-Rule" id="MF_00054"/>
    </source>
</evidence>
<protein>
    <recommendedName>
        <fullName evidence="1">Elongation factor G</fullName>
        <shortName evidence="1">EF-G</shortName>
    </recommendedName>
</protein>
<sequence length="694" mass="76246">MAREYKIEDYRNFGIMAHIDAGKTTMTERILFYTGKNHKIGETHDGASTMDWMEQEQERGITITSAATTTFWHGRDGKKRRFNIIDTPGHVDFTIEVERSLRVLDGAIALLDANAGVEPQTETVWRQAEKYHVPRMVFVNKMDKIGADFYRSVEMVGSRLGAVALPVQLPIGAENDFVGVVDLIEMKALTWDGTIGAPATVGEIPADMADKAEEYREKLIELAVEIDEAAMEAYLEGTMPTNDELRALIRKGTIEVKFHPILCGTAFKNRGVQPLLDAVVEFLPAPTDVPAIKGIDVKTETETTRESSDEAPLSMLAFKIMNDPFVGSLTFARIYSGKLTKGVSLENTVKGKRERIGRMLQMHSNSREDIDEAFAGDIVALAGLKETTTGDTLCDPLKPVILERMEFPDPVIEIAIEPKTKADQEKMGIALNRLAAEDPSFRVKSDEESGQTIIAGMGELHLDILVDRMKREFKVEANAGAPQVAYRESITRAAEIDYTHKKQSGGSGQFARVKIIFEPHDGDDFIFESKIVGGSVPKEYIPGVQKGIESVMGAGPLAGFPMLGVKATLIDGAYHDVDSSVLAFEIASRAAFREGAQKAGAQLLEPIMKVEVVTPEDYVGDVIGDLNSRRGQISGTEARGIATVVNAMVPLANMFGYVNSLRSMSQGRAQYTMQFDHYEPVPTAVAQEIQKKFA</sequence>
<keyword id="KW-0963">Cytoplasm</keyword>
<keyword id="KW-0251">Elongation factor</keyword>
<keyword id="KW-0342">GTP-binding</keyword>
<keyword id="KW-0547">Nucleotide-binding</keyword>
<keyword id="KW-0648">Protein biosynthesis</keyword>
<reference key="1">
    <citation type="submission" date="2007-12" db="EMBL/GenBank/DDBJ databases">
        <title>Brucella suis ATCC 23445 whole genome shotgun sequencing project.</title>
        <authorList>
            <person name="Setubal J.C."/>
            <person name="Bowns C."/>
            <person name="Boyle S."/>
            <person name="Crasta O.R."/>
            <person name="Czar M.J."/>
            <person name="Dharmanolla C."/>
            <person name="Gillespie J.J."/>
            <person name="Kenyon R.W."/>
            <person name="Lu J."/>
            <person name="Mane S."/>
            <person name="Mohapatra S."/>
            <person name="Nagrani S."/>
            <person name="Purkayastha A."/>
            <person name="Rajasimha H.K."/>
            <person name="Shallom J.M."/>
            <person name="Shallom S."/>
            <person name="Shukla M."/>
            <person name="Snyder E.E."/>
            <person name="Sobral B.W."/>
            <person name="Wattam A.R."/>
            <person name="Will R."/>
            <person name="Williams K."/>
            <person name="Yoo H."/>
            <person name="Bruce D."/>
            <person name="Detter C."/>
            <person name="Munk C."/>
            <person name="Brettin T.S."/>
        </authorList>
    </citation>
    <scope>NUCLEOTIDE SEQUENCE [LARGE SCALE GENOMIC DNA]</scope>
    <source>
        <strain>ATCC 23445 / NCTC 10510</strain>
    </source>
</reference>
<name>EFG_BRUSI</name>
<comment type="function">
    <text evidence="1">Catalyzes the GTP-dependent ribosomal translocation step during translation elongation. During this step, the ribosome changes from the pre-translocational (PRE) to the post-translocational (POST) state as the newly formed A-site-bound peptidyl-tRNA and P-site-bound deacylated tRNA move to the P and E sites, respectively. Catalyzes the coordinated movement of the two tRNA molecules, the mRNA and conformational changes in the ribosome.</text>
</comment>
<comment type="subcellular location">
    <subcellularLocation>
        <location evidence="1">Cytoplasm</location>
    </subcellularLocation>
</comment>
<comment type="similarity">
    <text evidence="1">Belongs to the TRAFAC class translation factor GTPase superfamily. Classic translation factor GTPase family. EF-G/EF-2 subfamily.</text>
</comment>
<dbReference type="EMBL" id="CP000911">
    <property type="protein sequence ID" value="ABY38336.1"/>
    <property type="molecule type" value="Genomic_DNA"/>
</dbReference>
<dbReference type="RefSeq" id="WP_006198754.1">
    <property type="nucleotide sequence ID" value="NC_010169.1"/>
</dbReference>
<dbReference type="SMR" id="B0CH35"/>
<dbReference type="KEGG" id="bmt:BSUIS_A1285"/>
<dbReference type="HOGENOM" id="CLU_002794_4_1_5"/>
<dbReference type="Proteomes" id="UP000008545">
    <property type="component" value="Chromosome I"/>
</dbReference>
<dbReference type="GO" id="GO:0005737">
    <property type="term" value="C:cytoplasm"/>
    <property type="evidence" value="ECO:0007669"/>
    <property type="project" value="UniProtKB-SubCell"/>
</dbReference>
<dbReference type="GO" id="GO:0005525">
    <property type="term" value="F:GTP binding"/>
    <property type="evidence" value="ECO:0007669"/>
    <property type="project" value="UniProtKB-UniRule"/>
</dbReference>
<dbReference type="GO" id="GO:0003924">
    <property type="term" value="F:GTPase activity"/>
    <property type="evidence" value="ECO:0007669"/>
    <property type="project" value="InterPro"/>
</dbReference>
<dbReference type="GO" id="GO:0097216">
    <property type="term" value="F:guanosine tetraphosphate binding"/>
    <property type="evidence" value="ECO:0007669"/>
    <property type="project" value="UniProtKB-ARBA"/>
</dbReference>
<dbReference type="GO" id="GO:0003746">
    <property type="term" value="F:translation elongation factor activity"/>
    <property type="evidence" value="ECO:0007669"/>
    <property type="project" value="UniProtKB-UniRule"/>
</dbReference>
<dbReference type="GO" id="GO:0032790">
    <property type="term" value="P:ribosome disassembly"/>
    <property type="evidence" value="ECO:0007669"/>
    <property type="project" value="TreeGrafter"/>
</dbReference>
<dbReference type="CDD" id="cd01886">
    <property type="entry name" value="EF-G"/>
    <property type="match status" value="1"/>
</dbReference>
<dbReference type="CDD" id="cd16262">
    <property type="entry name" value="EFG_III"/>
    <property type="match status" value="1"/>
</dbReference>
<dbReference type="CDD" id="cd01434">
    <property type="entry name" value="EFG_mtEFG1_IV"/>
    <property type="match status" value="1"/>
</dbReference>
<dbReference type="CDD" id="cd03713">
    <property type="entry name" value="EFG_mtEFG_C"/>
    <property type="match status" value="1"/>
</dbReference>
<dbReference type="CDD" id="cd04088">
    <property type="entry name" value="EFG_mtEFG_II"/>
    <property type="match status" value="1"/>
</dbReference>
<dbReference type="FunFam" id="2.40.30.10:FF:000006">
    <property type="entry name" value="Elongation factor G"/>
    <property type="match status" value="1"/>
</dbReference>
<dbReference type="FunFam" id="3.30.230.10:FF:000003">
    <property type="entry name" value="Elongation factor G"/>
    <property type="match status" value="1"/>
</dbReference>
<dbReference type="FunFam" id="3.30.70.240:FF:000001">
    <property type="entry name" value="Elongation factor G"/>
    <property type="match status" value="1"/>
</dbReference>
<dbReference type="FunFam" id="3.30.70.870:FF:000001">
    <property type="entry name" value="Elongation factor G"/>
    <property type="match status" value="1"/>
</dbReference>
<dbReference type="FunFam" id="3.40.50.300:FF:000029">
    <property type="entry name" value="Elongation factor G"/>
    <property type="match status" value="1"/>
</dbReference>
<dbReference type="Gene3D" id="3.30.230.10">
    <property type="match status" value="1"/>
</dbReference>
<dbReference type="Gene3D" id="3.30.70.240">
    <property type="match status" value="1"/>
</dbReference>
<dbReference type="Gene3D" id="3.30.70.870">
    <property type="entry name" value="Elongation Factor G (Translational Gtpase), domain 3"/>
    <property type="match status" value="1"/>
</dbReference>
<dbReference type="Gene3D" id="3.40.50.300">
    <property type="entry name" value="P-loop containing nucleotide triphosphate hydrolases"/>
    <property type="match status" value="1"/>
</dbReference>
<dbReference type="Gene3D" id="2.40.30.10">
    <property type="entry name" value="Translation factors"/>
    <property type="match status" value="1"/>
</dbReference>
<dbReference type="HAMAP" id="MF_00054_B">
    <property type="entry name" value="EF_G_EF_2_B"/>
    <property type="match status" value="1"/>
</dbReference>
<dbReference type="InterPro" id="IPR041095">
    <property type="entry name" value="EFG_II"/>
</dbReference>
<dbReference type="InterPro" id="IPR009022">
    <property type="entry name" value="EFG_III"/>
</dbReference>
<dbReference type="InterPro" id="IPR035647">
    <property type="entry name" value="EFG_III/V"/>
</dbReference>
<dbReference type="InterPro" id="IPR047872">
    <property type="entry name" value="EFG_IV"/>
</dbReference>
<dbReference type="InterPro" id="IPR035649">
    <property type="entry name" value="EFG_V"/>
</dbReference>
<dbReference type="InterPro" id="IPR000640">
    <property type="entry name" value="EFG_V-like"/>
</dbReference>
<dbReference type="InterPro" id="IPR004161">
    <property type="entry name" value="EFTu-like_2"/>
</dbReference>
<dbReference type="InterPro" id="IPR031157">
    <property type="entry name" value="G_TR_CS"/>
</dbReference>
<dbReference type="InterPro" id="IPR027417">
    <property type="entry name" value="P-loop_NTPase"/>
</dbReference>
<dbReference type="InterPro" id="IPR020568">
    <property type="entry name" value="Ribosomal_Su5_D2-typ_SF"/>
</dbReference>
<dbReference type="InterPro" id="IPR014721">
    <property type="entry name" value="Ribsml_uS5_D2-typ_fold_subgr"/>
</dbReference>
<dbReference type="InterPro" id="IPR005225">
    <property type="entry name" value="Small_GTP-bd"/>
</dbReference>
<dbReference type="InterPro" id="IPR000795">
    <property type="entry name" value="T_Tr_GTP-bd_dom"/>
</dbReference>
<dbReference type="InterPro" id="IPR009000">
    <property type="entry name" value="Transl_B-barrel_sf"/>
</dbReference>
<dbReference type="InterPro" id="IPR004540">
    <property type="entry name" value="Transl_elong_EFG/EF2"/>
</dbReference>
<dbReference type="InterPro" id="IPR005517">
    <property type="entry name" value="Transl_elong_EFG/EF2_IV"/>
</dbReference>
<dbReference type="NCBIfam" id="TIGR00484">
    <property type="entry name" value="EF-G"/>
    <property type="match status" value="1"/>
</dbReference>
<dbReference type="NCBIfam" id="NF009381">
    <property type="entry name" value="PRK12740.1-5"/>
    <property type="match status" value="1"/>
</dbReference>
<dbReference type="NCBIfam" id="TIGR00231">
    <property type="entry name" value="small_GTP"/>
    <property type="match status" value="1"/>
</dbReference>
<dbReference type="PANTHER" id="PTHR43261:SF1">
    <property type="entry name" value="RIBOSOME-RELEASING FACTOR 2, MITOCHONDRIAL"/>
    <property type="match status" value="1"/>
</dbReference>
<dbReference type="PANTHER" id="PTHR43261">
    <property type="entry name" value="TRANSLATION ELONGATION FACTOR G-RELATED"/>
    <property type="match status" value="1"/>
</dbReference>
<dbReference type="Pfam" id="PF00679">
    <property type="entry name" value="EFG_C"/>
    <property type="match status" value="1"/>
</dbReference>
<dbReference type="Pfam" id="PF14492">
    <property type="entry name" value="EFG_III"/>
    <property type="match status" value="1"/>
</dbReference>
<dbReference type="Pfam" id="PF03764">
    <property type="entry name" value="EFG_IV"/>
    <property type="match status" value="1"/>
</dbReference>
<dbReference type="Pfam" id="PF00009">
    <property type="entry name" value="GTP_EFTU"/>
    <property type="match status" value="1"/>
</dbReference>
<dbReference type="Pfam" id="PF03144">
    <property type="entry name" value="GTP_EFTU_D2"/>
    <property type="match status" value="1"/>
</dbReference>
<dbReference type="PRINTS" id="PR00315">
    <property type="entry name" value="ELONGATNFCT"/>
</dbReference>
<dbReference type="SMART" id="SM00838">
    <property type="entry name" value="EFG_C"/>
    <property type="match status" value="1"/>
</dbReference>
<dbReference type="SMART" id="SM00889">
    <property type="entry name" value="EFG_IV"/>
    <property type="match status" value="1"/>
</dbReference>
<dbReference type="SUPFAM" id="SSF54980">
    <property type="entry name" value="EF-G C-terminal domain-like"/>
    <property type="match status" value="2"/>
</dbReference>
<dbReference type="SUPFAM" id="SSF52540">
    <property type="entry name" value="P-loop containing nucleoside triphosphate hydrolases"/>
    <property type="match status" value="1"/>
</dbReference>
<dbReference type="SUPFAM" id="SSF54211">
    <property type="entry name" value="Ribosomal protein S5 domain 2-like"/>
    <property type="match status" value="1"/>
</dbReference>
<dbReference type="SUPFAM" id="SSF50447">
    <property type="entry name" value="Translation proteins"/>
    <property type="match status" value="1"/>
</dbReference>
<dbReference type="PROSITE" id="PS00301">
    <property type="entry name" value="G_TR_1"/>
    <property type="match status" value="1"/>
</dbReference>
<dbReference type="PROSITE" id="PS51722">
    <property type="entry name" value="G_TR_2"/>
    <property type="match status" value="1"/>
</dbReference>
<feature type="chain" id="PRO_1000074949" description="Elongation factor G">
    <location>
        <begin position="1"/>
        <end position="694"/>
    </location>
</feature>
<feature type="domain" description="tr-type G">
    <location>
        <begin position="8"/>
        <end position="287"/>
    </location>
</feature>
<feature type="binding site" evidence="1">
    <location>
        <begin position="17"/>
        <end position="24"/>
    </location>
    <ligand>
        <name>GTP</name>
        <dbReference type="ChEBI" id="CHEBI:37565"/>
    </ligand>
</feature>
<feature type="binding site" evidence="1">
    <location>
        <begin position="86"/>
        <end position="90"/>
    </location>
    <ligand>
        <name>GTP</name>
        <dbReference type="ChEBI" id="CHEBI:37565"/>
    </ligand>
</feature>
<feature type="binding site" evidence="1">
    <location>
        <begin position="140"/>
        <end position="143"/>
    </location>
    <ligand>
        <name>GTP</name>
        <dbReference type="ChEBI" id="CHEBI:37565"/>
    </ligand>
</feature>
<proteinExistence type="inferred from homology"/>
<gene>
    <name evidence="1" type="primary">fusA</name>
    <name type="ordered locus">BSUIS_A1285</name>
</gene>
<organism>
    <name type="scientific">Brucella suis (strain ATCC 23445 / NCTC 10510)</name>
    <dbReference type="NCBI Taxonomy" id="470137"/>
    <lineage>
        <taxon>Bacteria</taxon>
        <taxon>Pseudomonadati</taxon>
        <taxon>Pseudomonadota</taxon>
        <taxon>Alphaproteobacteria</taxon>
        <taxon>Hyphomicrobiales</taxon>
        <taxon>Brucellaceae</taxon>
        <taxon>Brucella/Ochrobactrum group</taxon>
        <taxon>Brucella</taxon>
    </lineage>
</organism>
<accession>B0CH35</accession>